<dbReference type="EC" id="2.3.1.9" evidence="5"/>
<dbReference type="EMBL" id="CP000448">
    <property type="protein sequence ID" value="ABI69231.1"/>
    <property type="molecule type" value="Genomic_DNA"/>
</dbReference>
<dbReference type="RefSeq" id="WP_011641324.1">
    <property type="nucleotide sequence ID" value="NC_008346.1"/>
</dbReference>
<dbReference type="SMR" id="Q0AVM3"/>
<dbReference type="STRING" id="335541.Swol_1934"/>
<dbReference type="KEGG" id="swo:Swol_1934"/>
<dbReference type="eggNOG" id="COG0183">
    <property type="taxonomic scope" value="Bacteria"/>
</dbReference>
<dbReference type="HOGENOM" id="CLU_031026_0_0_9"/>
<dbReference type="OrthoDB" id="9764892at2"/>
<dbReference type="UniPathway" id="UPA00863"/>
<dbReference type="Proteomes" id="UP000001968">
    <property type="component" value="Chromosome"/>
</dbReference>
<dbReference type="GO" id="GO:0005737">
    <property type="term" value="C:cytoplasm"/>
    <property type="evidence" value="ECO:0007669"/>
    <property type="project" value="UniProtKB-SubCell"/>
</dbReference>
<dbReference type="GO" id="GO:0003985">
    <property type="term" value="F:acetyl-CoA C-acetyltransferase activity"/>
    <property type="evidence" value="ECO:0007669"/>
    <property type="project" value="UniProtKB-EC"/>
</dbReference>
<dbReference type="GO" id="GO:0019605">
    <property type="term" value="P:butyrate metabolic process"/>
    <property type="evidence" value="ECO:0007669"/>
    <property type="project" value="UniProtKB-UniPathway"/>
</dbReference>
<dbReference type="CDD" id="cd00751">
    <property type="entry name" value="thiolase"/>
    <property type="match status" value="1"/>
</dbReference>
<dbReference type="FunFam" id="3.40.47.10:FF:000010">
    <property type="entry name" value="Acetyl-CoA acetyltransferase (Thiolase)"/>
    <property type="match status" value="1"/>
</dbReference>
<dbReference type="Gene3D" id="3.40.47.10">
    <property type="match status" value="2"/>
</dbReference>
<dbReference type="InterPro" id="IPR002155">
    <property type="entry name" value="Thiolase"/>
</dbReference>
<dbReference type="InterPro" id="IPR016039">
    <property type="entry name" value="Thiolase-like"/>
</dbReference>
<dbReference type="InterPro" id="IPR020615">
    <property type="entry name" value="Thiolase_acyl_enz_int_AS"/>
</dbReference>
<dbReference type="InterPro" id="IPR020610">
    <property type="entry name" value="Thiolase_AS"/>
</dbReference>
<dbReference type="InterPro" id="IPR020617">
    <property type="entry name" value="Thiolase_C"/>
</dbReference>
<dbReference type="InterPro" id="IPR020613">
    <property type="entry name" value="Thiolase_CS"/>
</dbReference>
<dbReference type="InterPro" id="IPR020616">
    <property type="entry name" value="Thiolase_N"/>
</dbReference>
<dbReference type="NCBIfam" id="TIGR01930">
    <property type="entry name" value="AcCoA-C-Actrans"/>
    <property type="match status" value="1"/>
</dbReference>
<dbReference type="PANTHER" id="PTHR18919:SF107">
    <property type="entry name" value="ACETYL-COA ACETYLTRANSFERASE, CYTOSOLIC"/>
    <property type="match status" value="1"/>
</dbReference>
<dbReference type="PANTHER" id="PTHR18919">
    <property type="entry name" value="ACETYL-COA C-ACYLTRANSFERASE"/>
    <property type="match status" value="1"/>
</dbReference>
<dbReference type="Pfam" id="PF02803">
    <property type="entry name" value="Thiolase_C"/>
    <property type="match status" value="1"/>
</dbReference>
<dbReference type="Pfam" id="PF00108">
    <property type="entry name" value="Thiolase_N"/>
    <property type="match status" value="1"/>
</dbReference>
<dbReference type="PIRSF" id="PIRSF000429">
    <property type="entry name" value="Ac-CoA_Ac_transf"/>
    <property type="match status" value="1"/>
</dbReference>
<dbReference type="SUPFAM" id="SSF53901">
    <property type="entry name" value="Thiolase-like"/>
    <property type="match status" value="2"/>
</dbReference>
<dbReference type="PROSITE" id="PS00098">
    <property type="entry name" value="THIOLASE_1"/>
    <property type="match status" value="1"/>
</dbReference>
<dbReference type="PROSITE" id="PS00737">
    <property type="entry name" value="THIOLASE_2"/>
    <property type="match status" value="1"/>
</dbReference>
<dbReference type="PROSITE" id="PS00099">
    <property type="entry name" value="THIOLASE_3"/>
    <property type="match status" value="1"/>
</dbReference>
<evidence type="ECO:0000250" key="1">
    <source>
        <dbReference type="UniProtKB" id="I6XHI4"/>
    </source>
</evidence>
<evidence type="ECO:0000269" key="2">
    <source>
    </source>
</evidence>
<evidence type="ECO:0000303" key="3">
    <source>
    </source>
</evidence>
<evidence type="ECO:0000305" key="4"/>
<evidence type="ECO:0000305" key="5">
    <source>
    </source>
</evidence>
<evidence type="ECO:0000312" key="6">
    <source>
        <dbReference type="EMBL" id="ABI69231.1"/>
    </source>
</evidence>
<feature type="chain" id="PRO_0000442213" description="Acetyl-CoA acetyltransferase">
    <location>
        <begin position="1"/>
        <end position="396"/>
    </location>
</feature>
<feature type="active site" description="Acyl-thioester intermediate" evidence="1">
    <location>
        <position position="89"/>
    </location>
</feature>
<feature type="active site" description="Proton acceptor" evidence="1">
    <location>
        <position position="352"/>
    </location>
</feature>
<feature type="active site" description="Proton acceptor" evidence="1">
    <location>
        <position position="382"/>
    </location>
</feature>
<feature type="binding site" evidence="1">
    <location>
        <begin position="223"/>
        <end position="225"/>
    </location>
    <ligand>
        <name>CoA</name>
        <dbReference type="ChEBI" id="CHEBI:57287"/>
    </ligand>
</feature>
<feature type="binding site" evidence="1">
    <location>
        <position position="249"/>
    </location>
    <ligand>
        <name>CoA</name>
        <dbReference type="ChEBI" id="CHEBI:57287"/>
    </ligand>
</feature>
<name>THLA_SYNWW</name>
<proteinExistence type="evidence at protein level"/>
<keyword id="KW-0012">Acyltransferase</keyword>
<keyword id="KW-0963">Cytoplasm</keyword>
<keyword id="KW-0276">Fatty acid metabolism</keyword>
<keyword id="KW-0443">Lipid metabolism</keyword>
<keyword id="KW-1185">Reference proteome</keyword>
<keyword id="KW-0808">Transferase</keyword>
<reference key="1">
    <citation type="journal article" date="2010" name="Environ. Microbiol.">
        <title>The genome of Syntrophomonas wolfei: new insights into syntrophic metabolism and biohydrogen production.</title>
        <authorList>
            <person name="Sieber J.R."/>
            <person name="Sims D.R."/>
            <person name="Han C."/>
            <person name="Kim E."/>
            <person name="Lykidis A."/>
            <person name="Lapidus A.L."/>
            <person name="McDonnald E."/>
            <person name="Rohlin L."/>
            <person name="Culley D.E."/>
            <person name="Gunsalus R."/>
            <person name="McInerney M.J."/>
        </authorList>
    </citation>
    <scope>NUCLEOTIDE SEQUENCE [LARGE SCALE GENOMIC DNA]</scope>
    <source>
        <strain>DSM 2245B / Goettingen</strain>
    </source>
</reference>
<reference key="2">
    <citation type="journal article" date="2013" name="PLoS ONE">
        <title>A proteomic view at the biochemistry of syntrophic butyrate oxidation in Syntrophomonas wolfei.</title>
        <authorList>
            <person name="Schmidt A."/>
            <person name="Mueller N."/>
            <person name="Schink B."/>
            <person name="Schleheck D."/>
        </authorList>
    </citation>
    <scope>IDENTIFICATION BY MASS SPECTROMETRY</scope>
    <scope>INDUCTION</scope>
    <scope>SUBCELLULAR LOCATION</scope>
    <scope>FUNCTION</scope>
    <scope>PATHWAY</scope>
</reference>
<sequence>MTREVVLVGACRTPVGTFGGTLKDVGSAQLGAIVMGEAIKRAGIKAEQIDEVIFGCVLQAGLGQNVARQCMINAGIPKEVTAFTINKVCGSGLRAVSLAAQVIKAGDADIIMAGGTENMDKAPFILPNARWGYRMSMPKGDLIDEMVWGGLTDVFNGYHMGITAENINDMYGITREEQDAFGFRSQTLAAQAIESGRFKDEIVPVVIKGKKGDIVFDTDEHPRKSTPEAMAKLAPAFKKGGSVTAGNASGINDAAAAVIVMSKEKADELGIKPMAKVVSYASGGVDPSVMGLGPIPASRKALEKAGLTIDDIDLIEANEAFAAQSIAVARDLGWADKMEKVNVNGGAIAIGHPIGSSGARILVTLLYEMQKRGSKKGLATLCIGGGMGTALIVEAL</sequence>
<protein>
    <recommendedName>
        <fullName evidence="3">Acetyl-CoA acetyltransferase</fullName>
        <ecNumber evidence="5">2.3.1.9</ecNumber>
    </recommendedName>
    <alternativeName>
        <fullName evidence="3">Acetoacetyl-CoA thiolase</fullName>
    </alternativeName>
</protein>
<organism>
    <name type="scientific">Syntrophomonas wolfei subsp. wolfei (strain DSM 2245B / Goettingen)</name>
    <dbReference type="NCBI Taxonomy" id="335541"/>
    <lineage>
        <taxon>Bacteria</taxon>
        <taxon>Bacillati</taxon>
        <taxon>Bacillota</taxon>
        <taxon>Clostridia</taxon>
        <taxon>Eubacteriales</taxon>
        <taxon>Syntrophomonadaceae</taxon>
        <taxon>Syntrophomonas</taxon>
    </lineage>
</organism>
<comment type="function">
    <text evidence="5">Involved in syntrophic growth of S.wolfei with butyrate, as part of the butyrate oxidation pathway. Probably catalyzes the beta-keto thiolysis of acetoacetyl-CoA, leading to 2 acetyl-CoA molecules.</text>
</comment>
<comment type="catalytic activity">
    <reaction evidence="5">
        <text>2 acetyl-CoA = acetoacetyl-CoA + CoA</text>
        <dbReference type="Rhea" id="RHEA:21036"/>
        <dbReference type="ChEBI" id="CHEBI:57286"/>
        <dbReference type="ChEBI" id="CHEBI:57287"/>
        <dbReference type="ChEBI" id="CHEBI:57288"/>
        <dbReference type="EC" id="2.3.1.9"/>
    </reaction>
</comment>
<comment type="pathway">
    <text evidence="5">Lipid metabolism; butanoate metabolism.</text>
</comment>
<comment type="subcellular location">
    <subcellularLocation>
        <location evidence="2">Cytoplasm</location>
    </subcellularLocation>
</comment>
<comment type="induction">
    <text evidence="2">Highly expressed during syntrophic growth with butyrate (at protein level). Seems to be constitutively expressed.</text>
</comment>
<comment type="similarity">
    <text evidence="4">Belongs to the thiolase-like superfamily. Thiolase family.</text>
</comment>
<gene>
    <name evidence="6" type="ordered locus">Swol_1934</name>
</gene>
<accession>Q0AVM3</accession>